<organism>
    <name type="scientific">Methanosarcina barkeri (strain Fusaro / DSM 804)</name>
    <dbReference type="NCBI Taxonomy" id="269797"/>
    <lineage>
        <taxon>Archaea</taxon>
        <taxon>Methanobacteriati</taxon>
        <taxon>Methanobacteriota</taxon>
        <taxon>Stenosarchaea group</taxon>
        <taxon>Methanomicrobia</taxon>
        <taxon>Methanosarcinales</taxon>
        <taxon>Methanosarcinaceae</taxon>
        <taxon>Methanosarcina</taxon>
    </lineage>
</organism>
<evidence type="ECO:0000255" key="1">
    <source>
        <dbReference type="HAMAP-Rule" id="MF_00579"/>
    </source>
</evidence>
<evidence type="ECO:0000305" key="2"/>
<evidence type="ECO:0007829" key="3">
    <source>
        <dbReference type="PDB" id="1M5S"/>
    </source>
</evidence>
<sequence>MEINGVEIEDTYAEAFPIKIARVLITAATKRWALVAATEATGFATSVIMCPAEAGIERLASPSETPDGRPGVYVQICTFKYEALEEQLLERIGQCVLTAPTTAVFNGLPEAEKQFNVGFKLKFFADGMESETQIAGRKVYKVPIMEGDFLAEENIGAIAGIAGGNFFIFGDSQMTALTAAEAAVDTIAELEGTITPFPGGIVASGSKSGANKYKFLKATANERFCPSIKDKIENTEIPADVNAVYEIVINGLDEESIKAAMKAGIKAAVTVPGVKKISAGNYGGKLGKYQFKLHELF</sequence>
<dbReference type="EC" id="2.3.1.101" evidence="1"/>
<dbReference type="EMBL" id="X91143">
    <property type="protein sequence ID" value="CAA62582.1"/>
    <property type="molecule type" value="Genomic_DNA"/>
</dbReference>
<dbReference type="EMBL" id="CP000099">
    <property type="protein sequence ID" value="AAZ69952.1"/>
    <property type="molecule type" value="Genomic_DNA"/>
</dbReference>
<dbReference type="PDB" id="1M5S">
    <property type="method" value="X-ray"/>
    <property type="resolution" value="1.85 A"/>
    <property type="chains" value="A/B/C/D=1-297"/>
</dbReference>
<dbReference type="PDBsum" id="1M5S"/>
<dbReference type="SMR" id="P55301"/>
<dbReference type="STRING" id="269797.Mbar_A0980"/>
<dbReference type="PaxDb" id="269797-Mbar_A0980"/>
<dbReference type="KEGG" id="mba:Mbar_A0980"/>
<dbReference type="eggNOG" id="arCOG02695">
    <property type="taxonomic scope" value="Archaea"/>
</dbReference>
<dbReference type="HOGENOM" id="CLU_081314_0_0_2"/>
<dbReference type="OrthoDB" id="81373at2157"/>
<dbReference type="BRENDA" id="2.3.1.101">
    <property type="organism ID" value="3250"/>
</dbReference>
<dbReference type="UniPathway" id="UPA00640">
    <property type="reaction ID" value="UER00693"/>
</dbReference>
<dbReference type="EvolutionaryTrace" id="P55301"/>
<dbReference type="GO" id="GO:0005737">
    <property type="term" value="C:cytoplasm"/>
    <property type="evidence" value="ECO:0007669"/>
    <property type="project" value="UniProtKB-SubCell"/>
</dbReference>
<dbReference type="GO" id="GO:0030270">
    <property type="term" value="F:formylmethanofuran-tetrahydromethanopterin N-formyltransferase activity"/>
    <property type="evidence" value="ECO:0007669"/>
    <property type="project" value="UniProtKB-UniRule"/>
</dbReference>
<dbReference type="GO" id="GO:0019386">
    <property type="term" value="P:methanogenesis, from carbon dioxide"/>
    <property type="evidence" value="ECO:0007669"/>
    <property type="project" value="UniProtKB-UniRule"/>
</dbReference>
<dbReference type="GO" id="GO:0006730">
    <property type="term" value="P:one-carbon metabolic process"/>
    <property type="evidence" value="ECO:0007669"/>
    <property type="project" value="UniProtKB-UniRule"/>
</dbReference>
<dbReference type="Gene3D" id="3.30.70.520">
    <property type="match status" value="2"/>
</dbReference>
<dbReference type="HAMAP" id="MF_00579">
    <property type="entry name" value="FTR"/>
    <property type="match status" value="1"/>
</dbReference>
<dbReference type="InterPro" id="IPR014053">
    <property type="entry name" value="ForMFR_H4MPT_ForTrfase"/>
</dbReference>
<dbReference type="InterPro" id="IPR002770">
    <property type="entry name" value="ForMFR_H4MPT_ForTrfase_C"/>
</dbReference>
<dbReference type="InterPro" id="IPR023447">
    <property type="entry name" value="ForMFR_H4MPT_ForTrfase_fd-like"/>
</dbReference>
<dbReference type="InterPro" id="IPR022667">
    <property type="entry name" value="ForMFR_H4MPT_ForTrfase_N"/>
</dbReference>
<dbReference type="NCBIfam" id="TIGR03119">
    <property type="entry name" value="one_C_fhcD"/>
    <property type="match status" value="1"/>
</dbReference>
<dbReference type="NCBIfam" id="NF002554">
    <property type="entry name" value="PRK02114.1"/>
    <property type="match status" value="1"/>
</dbReference>
<dbReference type="Pfam" id="PF01913">
    <property type="entry name" value="FTR"/>
    <property type="match status" value="1"/>
</dbReference>
<dbReference type="Pfam" id="PF02741">
    <property type="entry name" value="FTR_C"/>
    <property type="match status" value="1"/>
</dbReference>
<dbReference type="PIRSF" id="PIRSF006414">
    <property type="entry name" value="Ftr_formyl_trnsf"/>
    <property type="match status" value="1"/>
</dbReference>
<dbReference type="SUPFAM" id="SSF55112">
    <property type="entry name" value="Formylmethanofuran:tetrahydromethanopterin formyltransferase"/>
    <property type="match status" value="2"/>
</dbReference>
<accession>P55301</accession>
<accession>Q46DU0</accession>
<gene>
    <name evidence="1" type="primary">ftr</name>
    <name type="ordered locus">Mbar_A0980</name>
</gene>
<reference key="1">
    <citation type="journal article" date="1996" name="Arch. Microbiol.">
        <title>Primary structure and properties of the formyltransferase from the mesophilic Methanosarcina barkeri: comparison with the enzymes from thermophilic and hyperthermophilic methanogens.</title>
        <authorList>
            <person name="Kunow J."/>
            <person name="Shima S."/>
            <person name="Vorholt J.A."/>
            <person name="Thauer R.K."/>
        </authorList>
    </citation>
    <scope>NUCLEOTIDE SEQUENCE [GENOMIC DNA]</scope>
</reference>
<reference key="2">
    <citation type="journal article" date="2006" name="J. Bacteriol.">
        <title>The Methanosarcina barkeri genome: comparative analysis with Methanosarcina acetivorans and Methanosarcina mazei reveals extensive rearrangement within methanosarcinal genomes.</title>
        <authorList>
            <person name="Maeder D.L."/>
            <person name="Anderson I."/>
            <person name="Brettin T.S."/>
            <person name="Bruce D.C."/>
            <person name="Gilna P."/>
            <person name="Han C.S."/>
            <person name="Lapidus A."/>
            <person name="Metcalf W.W."/>
            <person name="Saunders E."/>
            <person name="Tapia R."/>
            <person name="Sowers K.R."/>
        </authorList>
    </citation>
    <scope>NUCLEOTIDE SEQUENCE [LARGE SCALE GENOMIC DNA]</scope>
    <source>
        <strain>Fusaro / DSM 804</strain>
    </source>
</reference>
<reference key="3">
    <citation type="journal article" date="1992" name="Eur. J. Biochem.">
        <title>Salt dependence, kinetic properties and catalytic mechanism of N-formylmethanofuran:tetrahydromethanopterin formyltransferase from the extreme thermophile Methanopyrus kandleri.</title>
        <authorList>
            <person name="Breitung J."/>
            <person name="Borner G."/>
            <person name="Scholz S."/>
            <person name="Linder D."/>
            <person name="Stetter K.O."/>
            <person name="Thauer R.K."/>
        </authorList>
    </citation>
    <scope>PROTEIN SEQUENCE OF 1-26</scope>
</reference>
<reference key="4">
    <citation type="journal article" date="2002" name="Protein Sci.">
        <title>Crystal structures and enzymatic properties of three formyltransferases from archaea: environmental adaptation and evolutionary relationship.</title>
        <authorList>
            <person name="Mamat B."/>
            <person name="Roth A."/>
            <person name="Grimm C."/>
            <person name="Ermler U."/>
            <person name="Tziatzios C."/>
            <person name="Schubert D."/>
            <person name="Thauer R.K."/>
            <person name="Shima S."/>
        </authorList>
    </citation>
    <scope>X-RAY CRYSTALLOGRAPHY (1.85 ANGSTROMS)</scope>
</reference>
<protein>
    <recommendedName>
        <fullName evidence="1">Formylmethanofuran--tetrahydromethanopterin formyltransferase</fullName>
        <shortName evidence="1">Ftr</shortName>
        <ecNumber evidence="1">2.3.1.101</ecNumber>
    </recommendedName>
    <alternativeName>
        <fullName evidence="1">H4MPT formyltransferase</fullName>
    </alternativeName>
</protein>
<feature type="chain" id="PRO_0000138117" description="Formylmethanofuran--tetrahydromethanopterin formyltransferase">
    <location>
        <begin position="1"/>
        <end position="297"/>
    </location>
</feature>
<feature type="sequence conflict" description="In Ref. 3; AA sequence." evidence="2" ref="3">
    <original>RVLIT</original>
    <variation>VIIAA</variation>
    <location>
        <begin position="22"/>
        <end position="26"/>
    </location>
</feature>
<feature type="strand" evidence="3">
    <location>
        <begin position="6"/>
        <end position="8"/>
    </location>
</feature>
<feature type="strand" evidence="3">
    <location>
        <begin position="12"/>
        <end position="26"/>
    </location>
</feature>
<feature type="helix" evidence="3">
    <location>
        <begin position="30"/>
        <end position="41"/>
    </location>
</feature>
<feature type="turn" evidence="3">
    <location>
        <begin position="47"/>
        <end position="49"/>
    </location>
</feature>
<feature type="strand" evidence="3">
    <location>
        <begin position="53"/>
        <end position="60"/>
    </location>
</feature>
<feature type="turn" evidence="3">
    <location>
        <begin position="62"/>
        <end position="64"/>
    </location>
</feature>
<feature type="strand" evidence="3">
    <location>
        <begin position="71"/>
        <end position="80"/>
    </location>
</feature>
<feature type="helix" evidence="3">
    <location>
        <begin position="81"/>
        <end position="95"/>
    </location>
</feature>
<feature type="turn" evidence="3">
    <location>
        <begin position="96"/>
        <end position="98"/>
    </location>
</feature>
<feature type="strand" evidence="3">
    <location>
        <begin position="103"/>
        <end position="107"/>
    </location>
</feature>
<feature type="strand" evidence="3">
    <location>
        <begin position="112"/>
        <end position="115"/>
    </location>
</feature>
<feature type="helix" evidence="3">
    <location>
        <begin position="117"/>
        <end position="122"/>
    </location>
</feature>
<feature type="helix" evidence="3">
    <location>
        <begin position="123"/>
        <end position="125"/>
    </location>
</feature>
<feature type="strand" evidence="3">
    <location>
        <begin position="130"/>
        <end position="134"/>
    </location>
</feature>
<feature type="strand" evidence="3">
    <location>
        <begin position="137"/>
        <end position="144"/>
    </location>
</feature>
<feature type="strand" evidence="3">
    <location>
        <begin position="147"/>
        <end position="153"/>
    </location>
</feature>
<feature type="strand" evidence="3">
    <location>
        <begin position="155"/>
        <end position="172"/>
    </location>
</feature>
<feature type="helix" evidence="3">
    <location>
        <begin position="173"/>
        <end position="187"/>
    </location>
</feature>
<feature type="helix" evidence="3">
    <location>
        <begin position="198"/>
        <end position="200"/>
    </location>
</feature>
<feature type="strand" evidence="3">
    <location>
        <begin position="202"/>
        <end position="204"/>
    </location>
</feature>
<feature type="strand" evidence="3">
    <location>
        <begin position="207"/>
        <end position="209"/>
    </location>
</feature>
<feature type="helix" evidence="3">
    <location>
        <begin position="222"/>
        <end position="224"/>
    </location>
</feature>
<feature type="helix" evidence="3">
    <location>
        <begin position="226"/>
        <end position="231"/>
    </location>
</feature>
<feature type="strand" evidence="3">
    <location>
        <begin position="243"/>
        <end position="253"/>
    </location>
</feature>
<feature type="helix" evidence="3">
    <location>
        <begin position="254"/>
        <end position="268"/>
    </location>
</feature>
<feature type="strand" evidence="3">
    <location>
        <begin position="274"/>
        <end position="278"/>
    </location>
</feature>
<feature type="strand" evidence="3">
    <location>
        <begin position="288"/>
        <end position="292"/>
    </location>
</feature>
<feature type="helix" evidence="3">
    <location>
        <begin position="293"/>
        <end position="296"/>
    </location>
</feature>
<proteinExistence type="evidence at protein level"/>
<name>FTR_METBF</name>
<keyword id="KW-0002">3D-structure</keyword>
<keyword id="KW-0012">Acyltransferase</keyword>
<keyword id="KW-0963">Cytoplasm</keyword>
<keyword id="KW-0903">Direct protein sequencing</keyword>
<keyword id="KW-0484">Methanogenesis</keyword>
<keyword id="KW-0554">One-carbon metabolism</keyword>
<keyword id="KW-0808">Transferase</keyword>
<comment type="function">
    <text evidence="1">Catalyzes the reversible transfer of a formyl group from formylmethanofuran (formyl-MFR) to tetrahydromethanopterin (H(4)MPT) to produce 5-formyl tetrahydromethanopterin (5-formyl-H(4)MPT) and methanofuran (MFR).</text>
</comment>
<comment type="catalytic activity">
    <reaction evidence="1">
        <text>N-formylmethanofuran + 5,6,7,8-tetrahydromethanopterin + H(+) = N(5)-formyl-5,6,7,8-tetrahydromethanopterin + methanofuran</text>
        <dbReference type="Rhea" id="RHEA:18061"/>
        <dbReference type="ChEBI" id="CHEBI:15378"/>
        <dbReference type="ChEBI" id="CHEBI:57727"/>
        <dbReference type="ChEBI" id="CHEBI:58018"/>
        <dbReference type="ChEBI" id="CHEBI:58103"/>
        <dbReference type="ChEBI" id="CHEBI:58151"/>
        <dbReference type="EC" id="2.3.1.101"/>
    </reaction>
</comment>
<comment type="pathway">
    <text evidence="1">One-carbon metabolism; methanogenesis from CO(2); 5,10-methenyl-5,6,7,8-tetrahydromethanopterin from CO(2): step 2/3.</text>
</comment>
<comment type="subunit">
    <text evidence="1">Homotetramer.</text>
</comment>
<comment type="subcellular location">
    <subcellularLocation>
        <location evidence="1">Cytoplasm</location>
    </subcellularLocation>
</comment>
<comment type="similarity">
    <text evidence="1">Belongs to the FTR family.</text>
</comment>